<comment type="function">
    <text evidence="3 4">Transcription factor; part of the gene cluster that mediates the biosynthesis of 11'-deoxyverticillin A, one of the dimeric epipolythiodioxopiperazines (ETPs) from the verticillin family that act as mycotoxins (PubMed:28376389, PubMed:29058652). 11'-deoxyverticillin A is required for normal conidiation (PubMed:28376389). Directly binds the consensus motif 5'-(T/C)(C/A)(G/T)GN3CC(G/T)(A/G)(G/C)-3' localized in the upstream regions of the verticillin biosynthetic genes (PubMed:29058652).</text>
</comment>
<comment type="subcellular location">
    <subcellularLocation>
        <location evidence="1">Nucleus</location>
    </subcellularLocation>
</comment>
<comment type="disruption phenotype">
    <text>Significantly decreases 11'-deoxyverticillin A production.</text>
</comment>
<name>VERZ_CLORO</name>
<evidence type="ECO:0000255" key="1">
    <source>
        <dbReference type="PROSITE-ProRule" id="PRU00227"/>
    </source>
</evidence>
<evidence type="ECO:0000256" key="2">
    <source>
        <dbReference type="SAM" id="MobiDB-lite"/>
    </source>
</evidence>
<evidence type="ECO:0000269" key="3">
    <source>
    </source>
</evidence>
<evidence type="ECO:0000269" key="4">
    <source>
    </source>
</evidence>
<evidence type="ECO:0000303" key="5">
    <source>
    </source>
</evidence>
<feature type="chain" id="PRO_0000450171" description="Transcription factor verZ">
    <location>
        <begin position="1"/>
        <end position="458"/>
    </location>
</feature>
<feature type="DNA-binding region" description="Zn(2)-C6 fungal-type" evidence="1">
    <location>
        <begin position="117"/>
        <end position="144"/>
    </location>
</feature>
<feature type="region of interest" description="Disordered" evidence="2">
    <location>
        <begin position="153"/>
        <end position="256"/>
    </location>
</feature>
<feature type="region of interest" description="Disordered" evidence="2">
    <location>
        <begin position="435"/>
        <end position="458"/>
    </location>
</feature>
<feature type="compositionally biased region" description="Polar residues" evidence="2">
    <location>
        <begin position="167"/>
        <end position="186"/>
    </location>
</feature>
<feature type="compositionally biased region" description="Polar residues" evidence="2">
    <location>
        <begin position="193"/>
        <end position="207"/>
    </location>
</feature>
<feature type="compositionally biased region" description="Polar residues" evidence="2">
    <location>
        <begin position="223"/>
        <end position="235"/>
    </location>
</feature>
<accession>A0A1U9YI06</accession>
<dbReference type="EMBL" id="KY359203">
    <property type="protein sequence ID" value="AQZ42167.1"/>
    <property type="molecule type" value="Genomic_DNA"/>
</dbReference>
<dbReference type="SMR" id="A0A1U9YI06"/>
<dbReference type="GO" id="GO:0005634">
    <property type="term" value="C:nucleus"/>
    <property type="evidence" value="ECO:0007669"/>
    <property type="project" value="UniProtKB-SubCell"/>
</dbReference>
<dbReference type="GO" id="GO:0003677">
    <property type="term" value="F:DNA binding"/>
    <property type="evidence" value="ECO:0007669"/>
    <property type="project" value="UniProtKB-KW"/>
</dbReference>
<dbReference type="GO" id="GO:0000981">
    <property type="term" value="F:DNA-binding transcription factor activity, RNA polymerase II-specific"/>
    <property type="evidence" value="ECO:0007669"/>
    <property type="project" value="InterPro"/>
</dbReference>
<dbReference type="GO" id="GO:0008270">
    <property type="term" value="F:zinc ion binding"/>
    <property type="evidence" value="ECO:0007669"/>
    <property type="project" value="InterPro"/>
</dbReference>
<dbReference type="CDD" id="cd00067">
    <property type="entry name" value="GAL4"/>
    <property type="match status" value="1"/>
</dbReference>
<dbReference type="Gene3D" id="4.10.240.10">
    <property type="entry name" value="Zn(2)-C6 fungal-type DNA-binding domain"/>
    <property type="match status" value="1"/>
</dbReference>
<dbReference type="InterPro" id="IPR050675">
    <property type="entry name" value="OAF3"/>
</dbReference>
<dbReference type="InterPro" id="IPR036864">
    <property type="entry name" value="Zn2-C6_fun-type_DNA-bd_sf"/>
</dbReference>
<dbReference type="InterPro" id="IPR001138">
    <property type="entry name" value="Zn2Cys6_DnaBD"/>
</dbReference>
<dbReference type="PANTHER" id="PTHR31069:SF31">
    <property type="entry name" value="MONODICTYPHENONE CLUSTER TRANSCRIPTION FACTOR-RELATED"/>
    <property type="match status" value="1"/>
</dbReference>
<dbReference type="PANTHER" id="PTHR31069">
    <property type="entry name" value="OLEATE-ACTIVATED TRANSCRIPTION FACTOR 1-RELATED"/>
    <property type="match status" value="1"/>
</dbReference>
<dbReference type="Pfam" id="PF00172">
    <property type="entry name" value="Zn_clus"/>
    <property type="match status" value="1"/>
</dbReference>
<dbReference type="PRINTS" id="PR00755">
    <property type="entry name" value="AFLATOXINBRP"/>
</dbReference>
<dbReference type="SMART" id="SM00066">
    <property type="entry name" value="GAL4"/>
    <property type="match status" value="1"/>
</dbReference>
<dbReference type="SUPFAM" id="SSF57701">
    <property type="entry name" value="Zn2/Cys6 DNA-binding domain"/>
    <property type="match status" value="1"/>
</dbReference>
<dbReference type="PROSITE" id="PS50048">
    <property type="entry name" value="ZN2_CY6_FUNGAL_2"/>
    <property type="match status" value="1"/>
</dbReference>
<keyword id="KW-0238">DNA-binding</keyword>
<keyword id="KW-0479">Metal-binding</keyword>
<keyword id="KW-0539">Nucleus</keyword>
<keyword id="KW-0804">Transcription</keyword>
<keyword id="KW-0805">Transcription regulation</keyword>
<keyword id="KW-0862">Zinc</keyword>
<sequence length="458" mass="49886">MVPRTGRRKTNYAVPPPVLQLASGWSALVVCLLHLLFSFLYGGGQQPIHPRPSSRLPRIFSFADRDIMRIGLPTQDFHAEHLGAIDPSSHHHMSQMAGQNGISHAQGRRGPKYRTSCDRCQAAKVKCGHEKPSCRRCTYHKVECVYGISRRMGRPRAKKNSGKDASPSPQGSINGASDENSRSKSATPAPVSFTGTEPITEARQSPVANAEGGRISRAESTQRAEPWTPSLTTNFEHPETSEGADDSAHGPMMQSMNTPLTFLPTENRMELDDFNDYPPMSSFMEDLADPMMSQQPISAPPSLDILDPHALIPDRTPTGNTRDTFNQVDTGLSVSLPQTTQLWNTSQAHQLHALFESNSTSKSKRRASTGQEISGIVSFNSVGHSNSGFGNKRMGELQIATGPLVSIGAGEQSAMMNIGPNPDTSSVAASRKFAMEEEDDPCSEIKLNPNRLRLEDGK</sequence>
<protein>
    <recommendedName>
        <fullName evidence="5">Transcription factor verZ</fullName>
    </recommendedName>
    <alternativeName>
        <fullName evidence="5">Verticillin biosynthesis cluster protein Z</fullName>
    </alternativeName>
</protein>
<proteinExistence type="evidence at protein level"/>
<organism>
    <name type="scientific">Clonostachys rogersoniana</name>
    <dbReference type="NCBI Taxonomy" id="122658"/>
    <lineage>
        <taxon>Eukaryota</taxon>
        <taxon>Fungi</taxon>
        <taxon>Dikarya</taxon>
        <taxon>Ascomycota</taxon>
        <taxon>Pezizomycotina</taxon>
        <taxon>Sordariomycetes</taxon>
        <taxon>Hypocreomycetidae</taxon>
        <taxon>Hypocreales</taxon>
        <taxon>Bionectriaceae</taxon>
        <taxon>Clonostachys</taxon>
    </lineage>
</organism>
<reference key="1">
    <citation type="journal article" date="2017" name="Fungal Genet. Biol.">
        <title>Identification and characterization of the verticillin biosynthetic gene cluster in Clonostachys rogersoniana.</title>
        <authorList>
            <person name="Wang Y."/>
            <person name="Hu P."/>
            <person name="Pan Y."/>
            <person name="Zhu Y."/>
            <person name="Liu X."/>
            <person name="Che Y."/>
            <person name="Liu G."/>
        </authorList>
    </citation>
    <scope>NUCLEOTIDE SEQUENCE [GENOMIC DNA]</scope>
    <scope>FUNCTION</scope>
    <source>
        <strain>XZC04-CC-302</strain>
    </source>
</reference>
<reference key="2">
    <citation type="journal article" date="2017" name="Microbiology">
        <title>VerZ, a Zn(II)2Cys6 DNA-binding protein, regulates the biosynthesis of verticillin in Clonostachys rogersoniana.</title>
        <authorList>
            <person name="Guo Z."/>
            <person name="Hao T."/>
            <person name="Wang Y."/>
            <person name="Pan Y."/>
            <person name="Ren F."/>
            <person name="Liu X."/>
            <person name="Che Y."/>
            <person name="Liu G."/>
        </authorList>
    </citation>
    <scope>FUNCTION</scope>
    <scope>DNA-BINDING</scope>
    <scope>DISRUPTION PHENOTYPE</scope>
</reference>
<gene>
    <name evidence="5" type="primary">verZ</name>
</gene>